<accession>Q0G9K8</accession>
<name>YCF4_LIRTU</name>
<geneLocation type="chloroplast"/>
<dbReference type="EMBL" id="DQ899947">
    <property type="protein sequence ID" value="ABI32520.1"/>
    <property type="molecule type" value="Genomic_DNA"/>
</dbReference>
<dbReference type="RefSeq" id="YP_740213.1">
    <property type="nucleotide sequence ID" value="NC_008326.1"/>
</dbReference>
<dbReference type="GeneID" id="4266635"/>
<dbReference type="GO" id="GO:0009535">
    <property type="term" value="C:chloroplast thylakoid membrane"/>
    <property type="evidence" value="ECO:0007669"/>
    <property type="project" value="UniProtKB-SubCell"/>
</dbReference>
<dbReference type="GO" id="GO:0009522">
    <property type="term" value="C:photosystem I"/>
    <property type="evidence" value="ECO:0007669"/>
    <property type="project" value="InterPro"/>
</dbReference>
<dbReference type="GO" id="GO:0015979">
    <property type="term" value="P:photosynthesis"/>
    <property type="evidence" value="ECO:0007669"/>
    <property type="project" value="UniProtKB-UniRule"/>
</dbReference>
<dbReference type="HAMAP" id="MF_00437">
    <property type="entry name" value="Ycf4"/>
    <property type="match status" value="1"/>
</dbReference>
<dbReference type="InterPro" id="IPR003359">
    <property type="entry name" value="PSI_Ycf4_assembly"/>
</dbReference>
<dbReference type="PANTHER" id="PTHR33288">
    <property type="match status" value="1"/>
</dbReference>
<dbReference type="PANTHER" id="PTHR33288:SF4">
    <property type="entry name" value="PHOTOSYSTEM I ASSEMBLY PROTEIN YCF4"/>
    <property type="match status" value="1"/>
</dbReference>
<dbReference type="Pfam" id="PF02392">
    <property type="entry name" value="Ycf4"/>
    <property type="match status" value="1"/>
</dbReference>
<comment type="function">
    <text evidence="1">Seems to be required for the assembly of the photosystem I complex.</text>
</comment>
<comment type="subcellular location">
    <subcellularLocation>
        <location evidence="1">Plastid</location>
        <location evidence="1">Chloroplast thylakoid membrane</location>
        <topology evidence="1">Multi-pass membrane protein</topology>
    </subcellularLocation>
</comment>
<comment type="similarity">
    <text evidence="1">Belongs to the Ycf4 family.</text>
</comment>
<protein>
    <recommendedName>
        <fullName evidence="1">Photosystem I assembly protein Ycf4</fullName>
    </recommendedName>
</protein>
<reference key="1">
    <citation type="journal article" date="2006" name="BMC Evol. Biol.">
        <title>Complete plastid genome sequences of Drimys, Liriodendron, and Piper: implications for the phylogenetic relationships of magnoliids.</title>
        <authorList>
            <person name="Cai Z."/>
            <person name="Penaflor C."/>
            <person name="Kuehl J.V."/>
            <person name="Leebens-Mack J."/>
            <person name="Carlson J.E."/>
            <person name="dePamphilis C.W."/>
            <person name="Boore J.L."/>
            <person name="Jansen R.K."/>
        </authorList>
    </citation>
    <scope>NUCLEOTIDE SEQUENCE [LARGE SCALE GENOMIC DNA]</scope>
</reference>
<evidence type="ECO:0000255" key="1">
    <source>
        <dbReference type="HAMAP-Rule" id="MF_00437"/>
    </source>
</evidence>
<gene>
    <name evidence="1" type="primary">ycf4</name>
</gene>
<keyword id="KW-0150">Chloroplast</keyword>
<keyword id="KW-0472">Membrane</keyword>
<keyword id="KW-0602">Photosynthesis</keyword>
<keyword id="KW-0934">Plastid</keyword>
<keyword id="KW-0793">Thylakoid</keyword>
<keyword id="KW-0812">Transmembrane</keyword>
<keyword id="KW-1133">Transmembrane helix</keyword>
<feature type="chain" id="PRO_0000275660" description="Photosystem I assembly protein Ycf4">
    <location>
        <begin position="1"/>
        <end position="184"/>
    </location>
</feature>
<feature type="transmembrane region" description="Helical" evidence="1">
    <location>
        <begin position="22"/>
        <end position="42"/>
    </location>
</feature>
<feature type="transmembrane region" description="Helical" evidence="1">
    <location>
        <begin position="57"/>
        <end position="77"/>
    </location>
</feature>
<organism>
    <name type="scientific">Liriodendron tulipifera</name>
    <name type="common">Tuliptree</name>
    <name type="synonym">Tulip poplar</name>
    <dbReference type="NCBI Taxonomy" id="3415"/>
    <lineage>
        <taxon>Eukaryota</taxon>
        <taxon>Viridiplantae</taxon>
        <taxon>Streptophyta</taxon>
        <taxon>Embryophyta</taxon>
        <taxon>Tracheophyta</taxon>
        <taxon>Spermatophyta</taxon>
        <taxon>Magnoliopsida</taxon>
        <taxon>Magnoliidae</taxon>
        <taxon>Magnoliales</taxon>
        <taxon>Magnoliaceae</taxon>
        <taxon>Liriodendron</taxon>
    </lineage>
</organism>
<sequence>MNWQSERIWIELITGSRKTSNFCWACILFLGSLGFLLVGTSSYLGRNLISLFPSQQILFFPQGIVMSFYGIAGLFISSYLWCTISWNVGSGYDLFDRKEGIVCIFRWGFPGINRRIFLRFLMRDIQSIRMEVKEGLYPRRVLYMEIRGQGAIPLTRTDENFTPREIEQKAAESAYFLRVPIEVF</sequence>
<proteinExistence type="inferred from homology"/>